<evidence type="ECO:0000255" key="1">
    <source>
        <dbReference type="HAMAP-Rule" id="MF_00306"/>
    </source>
</evidence>
<evidence type="ECO:0000305" key="2"/>
<evidence type="ECO:0007829" key="3">
    <source>
        <dbReference type="PDB" id="3DM5"/>
    </source>
</evidence>
<gene>
    <name evidence="1" type="primary">srp54</name>
    <name type="ordered locus">PF1731</name>
</gene>
<protein>
    <recommendedName>
        <fullName evidence="1">Signal recognition particle 54 kDa protein</fullName>
        <shortName evidence="1">SRP54</shortName>
        <ecNumber evidence="1">3.6.5.4</ecNumber>
    </recommendedName>
</protein>
<proteinExistence type="evidence at protein level"/>
<reference key="1">
    <citation type="journal article" date="2001" name="FEBS Lett.">
        <title>An archaeal protein homologous to mammalian SRP54 and bacterial Ffh recognizes a highly conserved region of SRP RNA.</title>
        <authorList>
            <person name="Maeshima H."/>
            <person name="Okuno E."/>
            <person name="Aimi T."/>
            <person name="Morinaga T."/>
            <person name="Itoh T."/>
        </authorList>
    </citation>
    <scope>NUCLEOTIDE SEQUENCE [GENOMIC DNA]</scope>
    <scope>INTERACTION WITH RNA</scope>
    <source>
        <strain>ATCC 43587 / DSM 3638 / JCM 8422 / Vc1</strain>
    </source>
</reference>
<reference key="2">
    <citation type="journal article" date="1999" name="Genetics">
        <title>Divergence of the hyperthermophilic archaea Pyrococcus furiosus and P. horikoshii inferred from complete genomic sequences.</title>
        <authorList>
            <person name="Maeder D.L."/>
            <person name="Weiss R.B."/>
            <person name="Dunn D.M."/>
            <person name="Cherry J.L."/>
            <person name="Gonzalez J.M."/>
            <person name="DiRuggiero J."/>
            <person name="Robb F.T."/>
        </authorList>
    </citation>
    <scope>NUCLEOTIDE SEQUENCE [LARGE SCALE GENOMIC DNA]</scope>
    <source>
        <strain>ATCC 43587 / DSM 3638 / JCM 8422 / Vc1</strain>
    </source>
</reference>
<dbReference type="EC" id="3.6.5.4" evidence="1"/>
<dbReference type="EMBL" id="AB057373">
    <property type="protein sequence ID" value="BAB64926.1"/>
    <property type="molecule type" value="Genomic_DNA"/>
</dbReference>
<dbReference type="EMBL" id="AE009950">
    <property type="protein sequence ID" value="AAL81855.1"/>
    <property type="molecule type" value="Genomic_DNA"/>
</dbReference>
<dbReference type="RefSeq" id="WP_011012877.1">
    <property type="nucleotide sequence ID" value="NZ_CP023154.1"/>
</dbReference>
<dbReference type="PDB" id="3DM5">
    <property type="method" value="X-ray"/>
    <property type="resolution" value="2.51 A"/>
    <property type="chains" value="A/B=1-443"/>
</dbReference>
<dbReference type="PDBsum" id="3DM5"/>
<dbReference type="SMR" id="Q8U070"/>
<dbReference type="STRING" id="186497.PF1731"/>
<dbReference type="TCDB" id="3.A.5.7.2">
    <property type="family name" value="the general secretory pathway (sec) family"/>
</dbReference>
<dbReference type="PaxDb" id="186497-PF1731"/>
<dbReference type="GeneID" id="41713562"/>
<dbReference type="KEGG" id="pfu:PF1731"/>
<dbReference type="PATRIC" id="fig|186497.12.peg.1799"/>
<dbReference type="eggNOG" id="arCOG01228">
    <property type="taxonomic scope" value="Archaea"/>
</dbReference>
<dbReference type="HOGENOM" id="CLU_009301_6_0_2"/>
<dbReference type="OrthoDB" id="52849at2157"/>
<dbReference type="PhylomeDB" id="Q8U070"/>
<dbReference type="BRENDA" id="3.6.5.4">
    <property type="organism ID" value="5243"/>
</dbReference>
<dbReference type="EvolutionaryTrace" id="Q8U070"/>
<dbReference type="Proteomes" id="UP000001013">
    <property type="component" value="Chromosome"/>
</dbReference>
<dbReference type="GO" id="GO:0048500">
    <property type="term" value="C:signal recognition particle"/>
    <property type="evidence" value="ECO:0007669"/>
    <property type="project" value="UniProtKB-UniRule"/>
</dbReference>
<dbReference type="GO" id="GO:0008312">
    <property type="term" value="F:7S RNA binding"/>
    <property type="evidence" value="ECO:0007669"/>
    <property type="project" value="UniProtKB-UniRule"/>
</dbReference>
<dbReference type="GO" id="GO:0016887">
    <property type="term" value="F:ATP hydrolysis activity"/>
    <property type="evidence" value="ECO:0007669"/>
    <property type="project" value="InterPro"/>
</dbReference>
<dbReference type="GO" id="GO:0005525">
    <property type="term" value="F:GTP binding"/>
    <property type="evidence" value="ECO:0007669"/>
    <property type="project" value="UniProtKB-UniRule"/>
</dbReference>
<dbReference type="GO" id="GO:0003924">
    <property type="term" value="F:GTPase activity"/>
    <property type="evidence" value="ECO:0007669"/>
    <property type="project" value="UniProtKB-UniRule"/>
</dbReference>
<dbReference type="GO" id="GO:0006614">
    <property type="term" value="P:SRP-dependent cotranslational protein targeting to membrane"/>
    <property type="evidence" value="ECO:0007669"/>
    <property type="project" value="InterPro"/>
</dbReference>
<dbReference type="CDD" id="cd17875">
    <property type="entry name" value="SRP54_G"/>
    <property type="match status" value="1"/>
</dbReference>
<dbReference type="FunFam" id="3.40.50.300:FF:000022">
    <property type="entry name" value="Signal recognition particle 54 kDa subunit"/>
    <property type="match status" value="1"/>
</dbReference>
<dbReference type="Gene3D" id="3.40.50.300">
    <property type="entry name" value="P-loop containing nucleotide triphosphate hydrolases"/>
    <property type="match status" value="1"/>
</dbReference>
<dbReference type="Gene3D" id="1.20.120.140">
    <property type="entry name" value="Signal recognition particle SRP54, nucleotide-binding domain"/>
    <property type="match status" value="1"/>
</dbReference>
<dbReference type="Gene3D" id="1.10.260.30">
    <property type="entry name" value="Signal recognition particle, SRP54 subunit, M-domain"/>
    <property type="match status" value="1"/>
</dbReference>
<dbReference type="HAMAP" id="MF_00306">
    <property type="entry name" value="SRP54"/>
    <property type="match status" value="1"/>
</dbReference>
<dbReference type="InterPro" id="IPR003593">
    <property type="entry name" value="AAA+_ATPase"/>
</dbReference>
<dbReference type="InterPro" id="IPR027417">
    <property type="entry name" value="P-loop_NTPase"/>
</dbReference>
<dbReference type="InterPro" id="IPR036891">
    <property type="entry name" value="Signal_recog_part_SRP54_M_sf"/>
</dbReference>
<dbReference type="InterPro" id="IPR013822">
    <property type="entry name" value="Signal_recog_particl_SRP54_hlx"/>
</dbReference>
<dbReference type="InterPro" id="IPR004125">
    <property type="entry name" value="Signal_recog_particle_SRP54_M"/>
</dbReference>
<dbReference type="InterPro" id="IPR036225">
    <property type="entry name" value="SRP/SRP_N"/>
</dbReference>
<dbReference type="InterPro" id="IPR022941">
    <property type="entry name" value="SRP54"/>
</dbReference>
<dbReference type="InterPro" id="IPR000897">
    <property type="entry name" value="SRP54_GTPase_dom"/>
</dbReference>
<dbReference type="InterPro" id="IPR042101">
    <property type="entry name" value="SRP54_N_sf"/>
</dbReference>
<dbReference type="PANTHER" id="PTHR11564">
    <property type="entry name" value="SIGNAL RECOGNITION PARTICLE 54K PROTEIN SRP54"/>
    <property type="match status" value="1"/>
</dbReference>
<dbReference type="PANTHER" id="PTHR11564:SF5">
    <property type="entry name" value="SIGNAL RECOGNITION PARTICLE SUBUNIT SRP54"/>
    <property type="match status" value="1"/>
</dbReference>
<dbReference type="Pfam" id="PF00448">
    <property type="entry name" value="SRP54"/>
    <property type="match status" value="1"/>
</dbReference>
<dbReference type="Pfam" id="PF02881">
    <property type="entry name" value="SRP54_N"/>
    <property type="match status" value="1"/>
</dbReference>
<dbReference type="Pfam" id="PF02978">
    <property type="entry name" value="SRP_SPB"/>
    <property type="match status" value="1"/>
</dbReference>
<dbReference type="SMART" id="SM00382">
    <property type="entry name" value="AAA"/>
    <property type="match status" value="1"/>
</dbReference>
<dbReference type="SMART" id="SM00962">
    <property type="entry name" value="SRP54"/>
    <property type="match status" value="1"/>
</dbReference>
<dbReference type="SMART" id="SM00963">
    <property type="entry name" value="SRP54_N"/>
    <property type="match status" value="1"/>
</dbReference>
<dbReference type="SUPFAM" id="SSF47364">
    <property type="entry name" value="Domain of the SRP/SRP receptor G-proteins"/>
    <property type="match status" value="1"/>
</dbReference>
<dbReference type="SUPFAM" id="SSF52540">
    <property type="entry name" value="P-loop containing nucleoside triphosphate hydrolases"/>
    <property type="match status" value="1"/>
</dbReference>
<dbReference type="SUPFAM" id="SSF47446">
    <property type="entry name" value="Signal peptide-binding domain"/>
    <property type="match status" value="1"/>
</dbReference>
<dbReference type="PROSITE" id="PS00300">
    <property type="entry name" value="SRP54"/>
    <property type="match status" value="1"/>
</dbReference>
<feature type="chain" id="PRO_0000101183" description="Signal recognition particle 54 kDa protein">
    <location>
        <begin position="1"/>
        <end position="443"/>
    </location>
</feature>
<feature type="binding site" evidence="1">
    <location>
        <begin position="107"/>
        <end position="114"/>
    </location>
    <ligand>
        <name>GTP</name>
        <dbReference type="ChEBI" id="CHEBI:37565"/>
    </ligand>
</feature>
<feature type="binding site" evidence="1">
    <location>
        <begin position="189"/>
        <end position="193"/>
    </location>
    <ligand>
        <name>GTP</name>
        <dbReference type="ChEBI" id="CHEBI:37565"/>
    </ligand>
</feature>
<feature type="binding site" evidence="1">
    <location>
        <begin position="247"/>
        <end position="250"/>
    </location>
    <ligand>
        <name>GTP</name>
        <dbReference type="ChEBI" id="CHEBI:37565"/>
    </ligand>
</feature>
<feature type="sequence conflict" description="In Ref. 1; BAB64926." evidence="2" ref="1">
    <original>L</original>
    <variation>V</variation>
    <location>
        <position position="150"/>
    </location>
</feature>
<feature type="helix" evidence="3">
    <location>
        <begin position="5"/>
        <end position="19"/>
    </location>
</feature>
<feature type="helix" evidence="3">
    <location>
        <begin position="25"/>
        <end position="41"/>
    </location>
</feature>
<feature type="helix" evidence="3">
    <location>
        <begin position="46"/>
        <end position="62"/>
    </location>
</feature>
<feature type="helix" evidence="3">
    <location>
        <begin position="71"/>
        <end position="86"/>
    </location>
</feature>
<feature type="strand" evidence="3">
    <location>
        <begin position="98"/>
        <end position="106"/>
    </location>
</feature>
<feature type="helix" evidence="3">
    <location>
        <begin position="113"/>
        <end position="125"/>
    </location>
</feature>
<feature type="turn" evidence="3">
    <location>
        <begin position="126"/>
        <end position="128"/>
    </location>
</feature>
<feature type="strand" evidence="3">
    <location>
        <begin position="131"/>
        <end position="135"/>
    </location>
</feature>
<feature type="helix" evidence="3">
    <location>
        <begin position="142"/>
        <end position="151"/>
    </location>
</feature>
<feature type="helix" evidence="3">
    <location>
        <begin position="152"/>
        <end position="154"/>
    </location>
</feature>
<feature type="strand" evidence="3">
    <location>
        <begin position="157"/>
        <end position="159"/>
    </location>
</feature>
<feature type="helix" evidence="3">
    <location>
        <begin position="167"/>
        <end position="180"/>
    </location>
</feature>
<feature type="strand" evidence="3">
    <location>
        <begin position="184"/>
        <end position="189"/>
    </location>
</feature>
<feature type="helix" evidence="3">
    <location>
        <begin position="198"/>
        <end position="211"/>
    </location>
</feature>
<feature type="strand" evidence="3">
    <location>
        <begin position="214"/>
        <end position="221"/>
    </location>
</feature>
<feature type="helix" evidence="3">
    <location>
        <begin position="222"/>
        <end position="227"/>
    </location>
</feature>
<feature type="helix" evidence="3">
    <location>
        <begin position="228"/>
        <end position="237"/>
    </location>
</feature>
<feature type="strand" evidence="3">
    <location>
        <begin position="242"/>
        <end position="247"/>
    </location>
</feature>
<feature type="helix" evidence="3">
    <location>
        <begin position="255"/>
        <end position="263"/>
    </location>
</feature>
<feature type="strand" evidence="3">
    <location>
        <begin position="269"/>
        <end position="273"/>
    </location>
</feature>
<feature type="strand" evidence="3">
    <location>
        <begin position="275"/>
        <end position="277"/>
    </location>
</feature>
<feature type="strand" evidence="3">
    <location>
        <begin position="281"/>
        <end position="283"/>
    </location>
</feature>
<feature type="helix" evidence="3">
    <location>
        <begin position="286"/>
        <end position="293"/>
    </location>
</feature>
<feature type="turn" evidence="3">
    <location>
        <begin position="294"/>
        <end position="297"/>
    </location>
</feature>
<feature type="helix" evidence="3">
    <location>
        <begin position="299"/>
        <end position="310"/>
    </location>
</feature>
<feature type="helix" evidence="3">
    <location>
        <begin position="313"/>
        <end position="324"/>
    </location>
</feature>
<feature type="helix" evidence="3">
    <location>
        <begin position="330"/>
        <end position="341"/>
    </location>
</feature>
<feature type="helix" evidence="3">
    <location>
        <begin position="369"/>
        <end position="379"/>
    </location>
</feature>
<feature type="helix" evidence="3">
    <location>
        <begin position="384"/>
        <end position="388"/>
    </location>
</feature>
<feature type="helix" evidence="3">
    <location>
        <begin position="390"/>
        <end position="392"/>
    </location>
</feature>
<feature type="helix" evidence="3">
    <location>
        <begin position="395"/>
        <end position="405"/>
    </location>
</feature>
<feature type="helix" evidence="3">
    <location>
        <begin position="409"/>
        <end position="427"/>
    </location>
</feature>
<organism>
    <name type="scientific">Pyrococcus furiosus (strain ATCC 43587 / DSM 3638 / JCM 8422 / Vc1)</name>
    <dbReference type="NCBI Taxonomy" id="186497"/>
    <lineage>
        <taxon>Archaea</taxon>
        <taxon>Methanobacteriati</taxon>
        <taxon>Methanobacteriota</taxon>
        <taxon>Thermococci</taxon>
        <taxon>Thermococcales</taxon>
        <taxon>Thermococcaceae</taxon>
        <taxon>Pyrococcus</taxon>
    </lineage>
</organism>
<accession>Q8U070</accession>
<accession>Q977Q0</accession>
<sequence>MVLDNLGKALANTLKKIARASSVDEALIKELVRDIQRALIQADVNVRLVLQLTREIQRRALEEKPPAGISKKEHIIKIVYEELTKFLGTEAKPIEIKEKPTILLMVGIQGSGKTTTVAKLARYFQKRGYKVGVVCSDTWRPGAYHQLRQLLDRYHIEVFGNPQEKDAIKLAKEGVDYFKSKGVDIIIVDTAGRHKEDKALIEEMKQISNVIHPHEVILVIDGTIGQQAYNQALAFKEATPIGSIIVTKLDGSAKGGGALSAVAATGAPIKFIGTGEKIDDIEPFDPPRFVSRLLGLGDIQGLLEKFKELEKEVEIKEEDIERFLRGKFTLKDMYAQLEAMRKMGPLKQILRMIPGLGYSLPDDVISIGEERLKKFKVIMDSMTEEELLNPEIINYSRIKRIARGSGTSTKDVKELLDQYRQMKKLFKSMNKRQLSRLARRFGM</sequence>
<name>SRP54_PYRFU</name>
<comment type="function">
    <text evidence="1">Involved in targeting and insertion of nascent membrane proteins into the cytoplasmic membrane. Binds to the hydrophobic signal sequence of the ribosome-nascent chain (RNC) as it emerges from the ribosomes. The SRP-RNC complex is then targeted to the cytoplasmic membrane where it interacts with the SRP receptor FtsY.</text>
</comment>
<comment type="catalytic activity">
    <reaction evidence="1">
        <text>GTP + H2O = GDP + phosphate + H(+)</text>
        <dbReference type="Rhea" id="RHEA:19669"/>
        <dbReference type="ChEBI" id="CHEBI:15377"/>
        <dbReference type="ChEBI" id="CHEBI:15378"/>
        <dbReference type="ChEBI" id="CHEBI:37565"/>
        <dbReference type="ChEBI" id="CHEBI:43474"/>
        <dbReference type="ChEBI" id="CHEBI:58189"/>
        <dbReference type="EC" id="3.6.5.4"/>
    </reaction>
</comment>
<comment type="subunit">
    <text evidence="2">Part of the signal recognition particle protein translocation system, which is composed of SRP and FtsY. Archaeal SRP consists of a 7S RNA molecule of 300 nucleotides and two protein subunits: SRP54 and SRP19 (Probable).</text>
</comment>
<comment type="subcellular location">
    <subcellularLocation>
        <location evidence="1">Cytoplasm</location>
    </subcellularLocation>
    <text evidence="1">The SRP-RNC complex is targeted to the cytoplasmic membrane.</text>
</comment>
<comment type="domain">
    <text evidence="1">Composed of three domains: the N-terminal N domain, which is responsible for interactions with the ribosome, the central G domain, which binds GTP, and the C-terminal M domain, which binds the RNA and the signal sequence of the RNC.</text>
</comment>
<comment type="similarity">
    <text evidence="1">Belongs to the GTP-binding SRP family. SRP54 subfamily.</text>
</comment>
<keyword id="KW-0002">3D-structure</keyword>
<keyword id="KW-0963">Cytoplasm</keyword>
<keyword id="KW-0342">GTP-binding</keyword>
<keyword id="KW-0378">Hydrolase</keyword>
<keyword id="KW-0547">Nucleotide-binding</keyword>
<keyword id="KW-1185">Reference proteome</keyword>
<keyword id="KW-0687">Ribonucleoprotein</keyword>
<keyword id="KW-0694">RNA-binding</keyword>
<keyword id="KW-0733">Signal recognition particle</keyword>